<protein>
    <recommendedName>
        <fullName evidence="1">Acetylglutamate kinase</fullName>
        <ecNumber evidence="1">2.7.2.8</ecNumber>
    </recommendedName>
    <alternativeName>
        <fullName evidence="1">N-acetyl-L-glutamate 5-phosphotransferase</fullName>
    </alternativeName>
    <alternativeName>
        <fullName evidence="1">NAG kinase</fullName>
        <shortName evidence="1">NAGK</shortName>
    </alternativeName>
</protein>
<keyword id="KW-0028">Amino-acid biosynthesis</keyword>
<keyword id="KW-0055">Arginine biosynthesis</keyword>
<keyword id="KW-0067">ATP-binding</keyword>
<keyword id="KW-0963">Cytoplasm</keyword>
<keyword id="KW-0418">Kinase</keyword>
<keyword id="KW-0547">Nucleotide-binding</keyword>
<keyword id="KW-1185">Reference proteome</keyword>
<keyword id="KW-0808">Transferase</keyword>
<sequence length="296" mass="31464">MNDILSIAPRDKAEILAQALPYIRKFHGKTMVIKYGGNAMTDPALQADFAEDVVLLKLVGMNPVVVHGGGPQIETALNRLGKKGEFIQGMRVTDAETMEVVEWVLAGEVQQDIVGLIHQAGGKAVGLTGRDGGLIRARKLKMVDNKDPNIEYDVGQVGDIVSIDPSVVRALQDDAFIPVISPIGFGEENESYNINADVVASKLATVLQAEKLVLLTNTPGVLDKAGSLLTDLTAREIDALFADGTISGGMLPKISGALDAAKAGVNAVHIIDGRVPHAMLLEILTDQAYGTMIRSH</sequence>
<name>ARGB_DELAS</name>
<accession>A9BY30</accession>
<evidence type="ECO:0000255" key="1">
    <source>
        <dbReference type="HAMAP-Rule" id="MF_00082"/>
    </source>
</evidence>
<gene>
    <name evidence="1" type="primary">argB</name>
    <name type="ordered locus">Daci_1321</name>
</gene>
<feature type="chain" id="PRO_1000092855" description="Acetylglutamate kinase">
    <location>
        <begin position="1"/>
        <end position="296"/>
    </location>
</feature>
<feature type="binding site" evidence="1">
    <location>
        <begin position="69"/>
        <end position="70"/>
    </location>
    <ligand>
        <name>substrate</name>
    </ligand>
</feature>
<feature type="binding site" evidence="1">
    <location>
        <position position="91"/>
    </location>
    <ligand>
        <name>substrate</name>
    </ligand>
</feature>
<feature type="binding site" evidence="1">
    <location>
        <position position="193"/>
    </location>
    <ligand>
        <name>substrate</name>
    </ligand>
</feature>
<feature type="site" description="Transition state stabilizer" evidence="1">
    <location>
        <position position="34"/>
    </location>
</feature>
<feature type="site" description="Transition state stabilizer" evidence="1">
    <location>
        <position position="253"/>
    </location>
</feature>
<organism>
    <name type="scientific">Delftia acidovorans (strain DSM 14801 / SPH-1)</name>
    <dbReference type="NCBI Taxonomy" id="398578"/>
    <lineage>
        <taxon>Bacteria</taxon>
        <taxon>Pseudomonadati</taxon>
        <taxon>Pseudomonadota</taxon>
        <taxon>Betaproteobacteria</taxon>
        <taxon>Burkholderiales</taxon>
        <taxon>Comamonadaceae</taxon>
        <taxon>Delftia</taxon>
    </lineage>
</organism>
<proteinExistence type="inferred from homology"/>
<comment type="function">
    <text evidence="1">Catalyzes the ATP-dependent phosphorylation of N-acetyl-L-glutamate.</text>
</comment>
<comment type="catalytic activity">
    <reaction evidence="1">
        <text>N-acetyl-L-glutamate + ATP = N-acetyl-L-glutamyl 5-phosphate + ADP</text>
        <dbReference type="Rhea" id="RHEA:14629"/>
        <dbReference type="ChEBI" id="CHEBI:30616"/>
        <dbReference type="ChEBI" id="CHEBI:44337"/>
        <dbReference type="ChEBI" id="CHEBI:57936"/>
        <dbReference type="ChEBI" id="CHEBI:456216"/>
        <dbReference type="EC" id="2.7.2.8"/>
    </reaction>
</comment>
<comment type="pathway">
    <text evidence="1">Amino-acid biosynthesis; L-arginine biosynthesis; N(2)-acetyl-L-ornithine from L-glutamate: step 2/4.</text>
</comment>
<comment type="subcellular location">
    <subcellularLocation>
        <location evidence="1">Cytoplasm</location>
    </subcellularLocation>
</comment>
<comment type="similarity">
    <text evidence="1">Belongs to the acetylglutamate kinase family. ArgB subfamily.</text>
</comment>
<dbReference type="EC" id="2.7.2.8" evidence="1"/>
<dbReference type="EMBL" id="CP000884">
    <property type="protein sequence ID" value="ABX33965.1"/>
    <property type="molecule type" value="Genomic_DNA"/>
</dbReference>
<dbReference type="RefSeq" id="WP_012203251.1">
    <property type="nucleotide sequence ID" value="NC_010002.1"/>
</dbReference>
<dbReference type="SMR" id="A9BY30"/>
<dbReference type="STRING" id="398578.Daci_1321"/>
<dbReference type="GeneID" id="94694892"/>
<dbReference type="KEGG" id="dac:Daci_1321"/>
<dbReference type="eggNOG" id="COG0548">
    <property type="taxonomic scope" value="Bacteria"/>
</dbReference>
<dbReference type="HOGENOM" id="CLU_053680_0_0_4"/>
<dbReference type="UniPathway" id="UPA00068">
    <property type="reaction ID" value="UER00107"/>
</dbReference>
<dbReference type="Proteomes" id="UP000000784">
    <property type="component" value="Chromosome"/>
</dbReference>
<dbReference type="GO" id="GO:0005737">
    <property type="term" value="C:cytoplasm"/>
    <property type="evidence" value="ECO:0007669"/>
    <property type="project" value="UniProtKB-SubCell"/>
</dbReference>
<dbReference type="GO" id="GO:0003991">
    <property type="term" value="F:acetylglutamate kinase activity"/>
    <property type="evidence" value="ECO:0007669"/>
    <property type="project" value="UniProtKB-UniRule"/>
</dbReference>
<dbReference type="GO" id="GO:0005524">
    <property type="term" value="F:ATP binding"/>
    <property type="evidence" value="ECO:0007669"/>
    <property type="project" value="UniProtKB-UniRule"/>
</dbReference>
<dbReference type="GO" id="GO:0042450">
    <property type="term" value="P:arginine biosynthetic process via ornithine"/>
    <property type="evidence" value="ECO:0007669"/>
    <property type="project" value="UniProtKB-UniRule"/>
</dbReference>
<dbReference type="GO" id="GO:0006526">
    <property type="term" value="P:L-arginine biosynthetic process"/>
    <property type="evidence" value="ECO:0007669"/>
    <property type="project" value="UniProtKB-UniPathway"/>
</dbReference>
<dbReference type="CDD" id="cd04250">
    <property type="entry name" value="AAK_NAGK-C"/>
    <property type="match status" value="1"/>
</dbReference>
<dbReference type="FunFam" id="3.40.1160.10:FF:000004">
    <property type="entry name" value="Acetylglutamate kinase"/>
    <property type="match status" value="1"/>
</dbReference>
<dbReference type="Gene3D" id="3.40.1160.10">
    <property type="entry name" value="Acetylglutamate kinase-like"/>
    <property type="match status" value="1"/>
</dbReference>
<dbReference type="HAMAP" id="MF_00082">
    <property type="entry name" value="ArgB"/>
    <property type="match status" value="1"/>
</dbReference>
<dbReference type="InterPro" id="IPR036393">
    <property type="entry name" value="AceGlu_kinase-like_sf"/>
</dbReference>
<dbReference type="InterPro" id="IPR004662">
    <property type="entry name" value="AcgluKinase_fam"/>
</dbReference>
<dbReference type="InterPro" id="IPR037528">
    <property type="entry name" value="ArgB"/>
</dbReference>
<dbReference type="InterPro" id="IPR001048">
    <property type="entry name" value="Asp/Glu/Uridylate_kinase"/>
</dbReference>
<dbReference type="InterPro" id="IPR001057">
    <property type="entry name" value="Glu/AcGlu_kinase"/>
</dbReference>
<dbReference type="InterPro" id="IPR041727">
    <property type="entry name" value="NAGK-C"/>
</dbReference>
<dbReference type="NCBIfam" id="TIGR00761">
    <property type="entry name" value="argB"/>
    <property type="match status" value="1"/>
</dbReference>
<dbReference type="PANTHER" id="PTHR23342">
    <property type="entry name" value="N-ACETYLGLUTAMATE SYNTHASE"/>
    <property type="match status" value="1"/>
</dbReference>
<dbReference type="PANTHER" id="PTHR23342:SF0">
    <property type="entry name" value="N-ACETYLGLUTAMATE SYNTHASE, MITOCHONDRIAL"/>
    <property type="match status" value="1"/>
</dbReference>
<dbReference type="Pfam" id="PF00696">
    <property type="entry name" value="AA_kinase"/>
    <property type="match status" value="1"/>
</dbReference>
<dbReference type="PIRSF" id="PIRSF000728">
    <property type="entry name" value="NAGK"/>
    <property type="match status" value="1"/>
</dbReference>
<dbReference type="PRINTS" id="PR00474">
    <property type="entry name" value="GLU5KINASE"/>
</dbReference>
<dbReference type="SUPFAM" id="SSF53633">
    <property type="entry name" value="Carbamate kinase-like"/>
    <property type="match status" value="1"/>
</dbReference>
<reference key="1">
    <citation type="submission" date="2007-11" db="EMBL/GenBank/DDBJ databases">
        <title>Complete sequence of Delftia acidovorans DSM 14801 / SPH-1.</title>
        <authorList>
            <person name="Copeland A."/>
            <person name="Lucas S."/>
            <person name="Lapidus A."/>
            <person name="Barry K."/>
            <person name="Glavina del Rio T."/>
            <person name="Dalin E."/>
            <person name="Tice H."/>
            <person name="Pitluck S."/>
            <person name="Lowry S."/>
            <person name="Clum A."/>
            <person name="Schmutz J."/>
            <person name="Larimer F."/>
            <person name="Land M."/>
            <person name="Hauser L."/>
            <person name="Kyrpides N."/>
            <person name="Kim E."/>
            <person name="Schleheck D."/>
            <person name="Richardson P."/>
        </authorList>
    </citation>
    <scope>NUCLEOTIDE SEQUENCE [LARGE SCALE GENOMIC DNA]</scope>
    <source>
        <strain>DSM 14801 / SPH-1</strain>
    </source>
</reference>